<dbReference type="EC" id="2.5.1.18"/>
<dbReference type="EMBL" id="AF213355">
    <property type="protein sequence ID" value="AAF21054.1"/>
    <property type="molecule type" value="Genomic_DNA"/>
</dbReference>
<dbReference type="EMBL" id="CU329672">
    <property type="protein sequence ID" value="CAB41055.1"/>
    <property type="molecule type" value="Genomic_DNA"/>
</dbReference>
<dbReference type="PIR" id="T41222">
    <property type="entry name" value="T41222"/>
</dbReference>
<dbReference type="RefSeq" id="NP_588298.1">
    <property type="nucleotide sequence ID" value="NM_001023288.2"/>
</dbReference>
<dbReference type="SMR" id="Q9Y7Q2"/>
<dbReference type="BioGRID" id="275279">
    <property type="interactions" value="33"/>
</dbReference>
<dbReference type="FunCoup" id="Q9Y7Q2">
    <property type="interactions" value="139"/>
</dbReference>
<dbReference type="STRING" id="284812.Q9Y7Q2"/>
<dbReference type="iPTMnet" id="Q9Y7Q2"/>
<dbReference type="PaxDb" id="4896-SPCC191.09c.1"/>
<dbReference type="EnsemblFungi" id="SPCC191.09c.1">
    <property type="protein sequence ID" value="SPCC191.09c.1:pep"/>
    <property type="gene ID" value="SPCC191.09c"/>
</dbReference>
<dbReference type="GeneID" id="2538694"/>
<dbReference type="KEGG" id="spo:2538694"/>
<dbReference type="PomBase" id="SPCC191.09c">
    <property type="gene designation" value="gst1"/>
</dbReference>
<dbReference type="VEuPathDB" id="FungiDB:SPCC191.09c"/>
<dbReference type="eggNOG" id="KOG0867">
    <property type="taxonomic scope" value="Eukaryota"/>
</dbReference>
<dbReference type="HOGENOM" id="CLU_011226_14_2_1"/>
<dbReference type="InParanoid" id="Q9Y7Q2"/>
<dbReference type="OMA" id="PYGPNPW"/>
<dbReference type="PhylomeDB" id="Q9Y7Q2"/>
<dbReference type="PRO" id="PR:Q9Y7Q2"/>
<dbReference type="Proteomes" id="UP000002485">
    <property type="component" value="Chromosome III"/>
</dbReference>
<dbReference type="GO" id="GO:0005737">
    <property type="term" value="C:cytoplasm"/>
    <property type="evidence" value="ECO:0000314"/>
    <property type="project" value="PomBase"/>
</dbReference>
<dbReference type="GO" id="GO:0005829">
    <property type="term" value="C:cytosol"/>
    <property type="evidence" value="ECO:0007005"/>
    <property type="project" value="PomBase"/>
</dbReference>
<dbReference type="GO" id="GO:0005634">
    <property type="term" value="C:nucleus"/>
    <property type="evidence" value="ECO:0000314"/>
    <property type="project" value="PomBase"/>
</dbReference>
<dbReference type="GO" id="GO:0004364">
    <property type="term" value="F:glutathione transferase activity"/>
    <property type="evidence" value="ECO:0000315"/>
    <property type="project" value="PomBase"/>
</dbReference>
<dbReference type="GO" id="GO:1990748">
    <property type="term" value="P:cellular detoxification"/>
    <property type="evidence" value="ECO:0000303"/>
    <property type="project" value="PomBase"/>
</dbReference>
<dbReference type="CDD" id="cd10293">
    <property type="entry name" value="GST_C_Ure2p"/>
    <property type="match status" value="1"/>
</dbReference>
<dbReference type="CDD" id="cd03048">
    <property type="entry name" value="GST_N_Ure2p_like"/>
    <property type="match status" value="1"/>
</dbReference>
<dbReference type="FunFam" id="1.20.1050.130:FF:000016">
    <property type="entry name" value="Glutathione S-transferase 1"/>
    <property type="match status" value="1"/>
</dbReference>
<dbReference type="Gene3D" id="1.20.1050.130">
    <property type="match status" value="1"/>
</dbReference>
<dbReference type="InterPro" id="IPR010987">
    <property type="entry name" value="Glutathione-S-Trfase_C-like"/>
</dbReference>
<dbReference type="InterPro" id="IPR036282">
    <property type="entry name" value="Glutathione-S-Trfase_C_sf"/>
</dbReference>
<dbReference type="InterPro" id="IPR040079">
    <property type="entry name" value="Glutathione_S-Trfase"/>
</dbReference>
<dbReference type="InterPro" id="IPR004045">
    <property type="entry name" value="Glutathione_S-Trfase_N"/>
</dbReference>
<dbReference type="InterPro" id="IPR004046">
    <property type="entry name" value="GST_C"/>
</dbReference>
<dbReference type="InterPro" id="IPR036249">
    <property type="entry name" value="Thioredoxin-like_sf"/>
</dbReference>
<dbReference type="PANTHER" id="PTHR44051">
    <property type="entry name" value="GLUTATHIONE S-TRANSFERASE-RELATED"/>
    <property type="match status" value="1"/>
</dbReference>
<dbReference type="PANTHER" id="PTHR44051:SF3">
    <property type="entry name" value="TRANSCRIPTIONAL REGULATOR URE2"/>
    <property type="match status" value="1"/>
</dbReference>
<dbReference type="Pfam" id="PF00043">
    <property type="entry name" value="GST_C"/>
    <property type="match status" value="1"/>
</dbReference>
<dbReference type="Pfam" id="PF02798">
    <property type="entry name" value="GST_N"/>
    <property type="match status" value="1"/>
</dbReference>
<dbReference type="SFLD" id="SFLDS00019">
    <property type="entry name" value="Glutathione_Transferase_(cytos"/>
    <property type="match status" value="1"/>
</dbReference>
<dbReference type="SFLD" id="SFLDG01151">
    <property type="entry name" value="Main.2:_Nu-like"/>
    <property type="match status" value="1"/>
</dbReference>
<dbReference type="SUPFAM" id="SSF47616">
    <property type="entry name" value="GST C-terminal domain-like"/>
    <property type="match status" value="1"/>
</dbReference>
<dbReference type="SUPFAM" id="SSF52833">
    <property type="entry name" value="Thioredoxin-like"/>
    <property type="match status" value="1"/>
</dbReference>
<dbReference type="PROSITE" id="PS50405">
    <property type="entry name" value="GST_CTER"/>
    <property type="match status" value="1"/>
</dbReference>
<dbReference type="PROSITE" id="PS50404">
    <property type="entry name" value="GST_NTER"/>
    <property type="match status" value="1"/>
</dbReference>
<accession>Q9Y7Q2</accession>
<reference key="1">
    <citation type="journal article" date="2001" name="Biochim. Biophys. Acta">
        <title>Characterization and regulation of glutathione S-transferase gene from Schizosaccharomyces pombe.</title>
        <authorList>
            <person name="Kim H.-G."/>
            <person name="Park K.-N."/>
            <person name="Cho Y.-W."/>
            <person name="Park E.-H."/>
            <person name="Fuchs J.A."/>
            <person name="Lim C.-J."/>
        </authorList>
    </citation>
    <scope>NUCLEOTIDE SEQUENCE [GENOMIC DNA]</scope>
</reference>
<reference key="2">
    <citation type="journal article" date="2002" name="Nature">
        <title>The genome sequence of Schizosaccharomyces pombe.</title>
        <authorList>
            <person name="Wood V."/>
            <person name="Gwilliam R."/>
            <person name="Rajandream M.A."/>
            <person name="Lyne M.H."/>
            <person name="Lyne R."/>
            <person name="Stewart A."/>
            <person name="Sgouros J.G."/>
            <person name="Peat N."/>
            <person name="Hayles J."/>
            <person name="Baker S.G."/>
            <person name="Basham D."/>
            <person name="Bowman S."/>
            <person name="Brooks K."/>
            <person name="Brown D."/>
            <person name="Brown S."/>
            <person name="Chillingworth T."/>
            <person name="Churcher C.M."/>
            <person name="Collins M."/>
            <person name="Connor R."/>
            <person name="Cronin A."/>
            <person name="Davis P."/>
            <person name="Feltwell T."/>
            <person name="Fraser A."/>
            <person name="Gentles S."/>
            <person name="Goble A."/>
            <person name="Hamlin N."/>
            <person name="Harris D.E."/>
            <person name="Hidalgo J."/>
            <person name="Hodgson G."/>
            <person name="Holroyd S."/>
            <person name="Hornsby T."/>
            <person name="Howarth S."/>
            <person name="Huckle E.J."/>
            <person name="Hunt S."/>
            <person name="Jagels K."/>
            <person name="James K.D."/>
            <person name="Jones L."/>
            <person name="Jones M."/>
            <person name="Leather S."/>
            <person name="McDonald S."/>
            <person name="McLean J."/>
            <person name="Mooney P."/>
            <person name="Moule S."/>
            <person name="Mungall K.L."/>
            <person name="Murphy L.D."/>
            <person name="Niblett D."/>
            <person name="Odell C."/>
            <person name="Oliver K."/>
            <person name="O'Neil S."/>
            <person name="Pearson D."/>
            <person name="Quail M.A."/>
            <person name="Rabbinowitsch E."/>
            <person name="Rutherford K.M."/>
            <person name="Rutter S."/>
            <person name="Saunders D."/>
            <person name="Seeger K."/>
            <person name="Sharp S."/>
            <person name="Skelton J."/>
            <person name="Simmonds M.N."/>
            <person name="Squares R."/>
            <person name="Squares S."/>
            <person name="Stevens K."/>
            <person name="Taylor K."/>
            <person name="Taylor R.G."/>
            <person name="Tivey A."/>
            <person name="Walsh S.V."/>
            <person name="Warren T."/>
            <person name="Whitehead S."/>
            <person name="Woodward J.R."/>
            <person name="Volckaert G."/>
            <person name="Aert R."/>
            <person name="Robben J."/>
            <person name="Grymonprez B."/>
            <person name="Weltjens I."/>
            <person name="Vanstreels E."/>
            <person name="Rieger M."/>
            <person name="Schaefer M."/>
            <person name="Mueller-Auer S."/>
            <person name="Gabel C."/>
            <person name="Fuchs M."/>
            <person name="Duesterhoeft A."/>
            <person name="Fritzc C."/>
            <person name="Holzer E."/>
            <person name="Moestl D."/>
            <person name="Hilbert H."/>
            <person name="Borzym K."/>
            <person name="Langer I."/>
            <person name="Beck A."/>
            <person name="Lehrach H."/>
            <person name="Reinhardt R."/>
            <person name="Pohl T.M."/>
            <person name="Eger P."/>
            <person name="Zimmermann W."/>
            <person name="Wedler H."/>
            <person name="Wambutt R."/>
            <person name="Purnelle B."/>
            <person name="Goffeau A."/>
            <person name="Cadieu E."/>
            <person name="Dreano S."/>
            <person name="Gloux S."/>
            <person name="Lelaure V."/>
            <person name="Mottier S."/>
            <person name="Galibert F."/>
            <person name="Aves S.J."/>
            <person name="Xiang Z."/>
            <person name="Hunt C."/>
            <person name="Moore K."/>
            <person name="Hurst S.M."/>
            <person name="Lucas M."/>
            <person name="Rochet M."/>
            <person name="Gaillardin C."/>
            <person name="Tallada V.A."/>
            <person name="Garzon A."/>
            <person name="Thode G."/>
            <person name="Daga R.R."/>
            <person name="Cruzado L."/>
            <person name="Jimenez J."/>
            <person name="Sanchez M."/>
            <person name="del Rey F."/>
            <person name="Benito J."/>
            <person name="Dominguez A."/>
            <person name="Revuelta J.L."/>
            <person name="Moreno S."/>
            <person name="Armstrong J."/>
            <person name="Forsburg S.L."/>
            <person name="Cerutti L."/>
            <person name="Lowe T."/>
            <person name="McCombie W.R."/>
            <person name="Paulsen I."/>
            <person name="Potashkin J."/>
            <person name="Shpakovski G.V."/>
            <person name="Ussery D."/>
            <person name="Barrell B.G."/>
            <person name="Nurse P."/>
        </authorList>
    </citation>
    <scope>NUCLEOTIDE SEQUENCE [LARGE SCALE GENOMIC DNA]</scope>
    <source>
        <strain>972 / ATCC 24843</strain>
    </source>
</reference>
<organism>
    <name type="scientific">Schizosaccharomyces pombe (strain 972 / ATCC 24843)</name>
    <name type="common">Fission yeast</name>
    <dbReference type="NCBI Taxonomy" id="284812"/>
    <lineage>
        <taxon>Eukaryota</taxon>
        <taxon>Fungi</taxon>
        <taxon>Dikarya</taxon>
        <taxon>Ascomycota</taxon>
        <taxon>Taphrinomycotina</taxon>
        <taxon>Schizosaccharomycetes</taxon>
        <taxon>Schizosaccharomycetales</taxon>
        <taxon>Schizosaccharomycetaceae</taxon>
        <taxon>Schizosaccharomyces</taxon>
    </lineage>
</organism>
<sequence>MAQFTLWSHAHGPNPWKVVQALKELDLTYETRYVNFSKNEQKSPEHLALNPNGRVPTLIDHHNNDYTIWESDAILIYLADKYDTERKISLPRDHPEYYKVIQYLFFQASGQGIIWGQAGWFSVYHQELVISAITRYRNEIKRVLGVLEDILKDRDYLVANRFTIADLSFISWNNFLEIIFAEGKFSIEEEVPQLDFEKEFPRTYSWHQRLLARPASKATFEERSKALDN</sequence>
<protein>
    <recommendedName>
        <fullName>Glutathione S-transferase 1</fullName>
        <ecNumber>2.5.1.18</ecNumber>
    </recommendedName>
    <alternativeName>
        <fullName>GST-I</fullName>
    </alternativeName>
</protein>
<feature type="chain" id="PRO_0000185984" description="Glutathione S-transferase 1">
    <location>
        <begin position="1"/>
        <end position="229"/>
    </location>
</feature>
<feature type="domain" description="GST N-terminal">
    <location>
        <begin position="2"/>
        <end position="86"/>
    </location>
</feature>
<feature type="domain" description="GST C-terminal">
    <location>
        <begin position="93"/>
        <end position="229"/>
    </location>
</feature>
<gene>
    <name type="primary">gst1</name>
    <name type="ORF">SPCC191.09c</name>
</gene>
<comment type="function">
    <text>Involved in the oxidative stress response and detoxification.</text>
</comment>
<comment type="catalytic activity">
    <reaction>
        <text>RX + glutathione = an S-substituted glutathione + a halide anion + H(+)</text>
        <dbReference type="Rhea" id="RHEA:16437"/>
        <dbReference type="ChEBI" id="CHEBI:15378"/>
        <dbReference type="ChEBI" id="CHEBI:16042"/>
        <dbReference type="ChEBI" id="CHEBI:17792"/>
        <dbReference type="ChEBI" id="CHEBI:57925"/>
        <dbReference type="ChEBI" id="CHEBI:90779"/>
        <dbReference type="EC" id="2.5.1.18"/>
    </reaction>
</comment>
<comment type="induction">
    <text>By heavy metals such as cadmium.</text>
</comment>
<comment type="similarity">
    <text evidence="1">Belongs to the GST superfamily.</text>
</comment>
<evidence type="ECO:0000305" key="1"/>
<keyword id="KW-1185">Reference proteome</keyword>
<keyword id="KW-0808">Transferase</keyword>
<name>GST1_SCHPO</name>
<proteinExistence type="evidence at transcript level"/>